<keyword id="KW-0050">Antiport</keyword>
<keyword id="KW-0997">Cell inner membrane</keyword>
<keyword id="KW-1003">Cell membrane</keyword>
<keyword id="KW-0406">Ion transport</keyword>
<keyword id="KW-0472">Membrane</keyword>
<keyword id="KW-0915">Sodium</keyword>
<keyword id="KW-0739">Sodium transport</keyword>
<keyword id="KW-0812">Transmembrane</keyword>
<keyword id="KW-1133">Transmembrane helix</keyword>
<keyword id="KW-0813">Transport</keyword>
<reference key="1">
    <citation type="submission" date="2006-06" db="EMBL/GenBank/DDBJ databases">
        <title>Complete sequence of Pseudoalteromonas atlantica T6c.</title>
        <authorList>
            <consortium name="US DOE Joint Genome Institute"/>
            <person name="Copeland A."/>
            <person name="Lucas S."/>
            <person name="Lapidus A."/>
            <person name="Barry K."/>
            <person name="Detter J.C."/>
            <person name="Glavina del Rio T."/>
            <person name="Hammon N."/>
            <person name="Israni S."/>
            <person name="Dalin E."/>
            <person name="Tice H."/>
            <person name="Pitluck S."/>
            <person name="Saunders E."/>
            <person name="Brettin T."/>
            <person name="Bruce D."/>
            <person name="Han C."/>
            <person name="Tapia R."/>
            <person name="Gilna P."/>
            <person name="Schmutz J."/>
            <person name="Larimer F."/>
            <person name="Land M."/>
            <person name="Hauser L."/>
            <person name="Kyrpides N."/>
            <person name="Kim E."/>
            <person name="Karls A.C."/>
            <person name="Bartlett D."/>
            <person name="Higgins B.P."/>
            <person name="Richardson P."/>
        </authorList>
    </citation>
    <scope>NUCLEOTIDE SEQUENCE [LARGE SCALE GENOMIC DNA]</scope>
    <source>
        <strain>T6c / ATCC BAA-1087</strain>
    </source>
</reference>
<accession>Q15N42</accession>
<gene>
    <name evidence="1" type="primary">nhaA2</name>
    <name type="ordered locus">Patl_4197</name>
</gene>
<evidence type="ECO:0000255" key="1">
    <source>
        <dbReference type="HAMAP-Rule" id="MF_01844"/>
    </source>
</evidence>
<dbReference type="EMBL" id="CP000388">
    <property type="protein sequence ID" value="ABG42696.1"/>
    <property type="molecule type" value="Genomic_DNA"/>
</dbReference>
<dbReference type="RefSeq" id="WP_011576886.1">
    <property type="nucleotide sequence ID" value="NC_008228.1"/>
</dbReference>
<dbReference type="SMR" id="Q15N42"/>
<dbReference type="STRING" id="342610.Patl_4197"/>
<dbReference type="KEGG" id="pat:Patl_4197"/>
<dbReference type="eggNOG" id="COG3004">
    <property type="taxonomic scope" value="Bacteria"/>
</dbReference>
<dbReference type="HOGENOM" id="CLU_015803_1_0_6"/>
<dbReference type="OrthoDB" id="9808135at2"/>
<dbReference type="Proteomes" id="UP000001981">
    <property type="component" value="Chromosome"/>
</dbReference>
<dbReference type="GO" id="GO:0005886">
    <property type="term" value="C:plasma membrane"/>
    <property type="evidence" value="ECO:0007669"/>
    <property type="project" value="UniProtKB-SubCell"/>
</dbReference>
<dbReference type="GO" id="GO:0015385">
    <property type="term" value="F:sodium:proton antiporter activity"/>
    <property type="evidence" value="ECO:0007669"/>
    <property type="project" value="TreeGrafter"/>
</dbReference>
<dbReference type="GO" id="GO:0006885">
    <property type="term" value="P:regulation of pH"/>
    <property type="evidence" value="ECO:0007669"/>
    <property type="project" value="InterPro"/>
</dbReference>
<dbReference type="Gene3D" id="1.20.1530.10">
    <property type="entry name" value="Na+/H+ antiporter like domain"/>
    <property type="match status" value="1"/>
</dbReference>
<dbReference type="HAMAP" id="MF_01844">
    <property type="entry name" value="NhaA"/>
    <property type="match status" value="1"/>
</dbReference>
<dbReference type="InterPro" id="IPR023171">
    <property type="entry name" value="Na/H_antiporter_dom_sf"/>
</dbReference>
<dbReference type="InterPro" id="IPR004670">
    <property type="entry name" value="NhaA"/>
</dbReference>
<dbReference type="NCBIfam" id="TIGR00773">
    <property type="entry name" value="NhaA"/>
    <property type="match status" value="1"/>
</dbReference>
<dbReference type="NCBIfam" id="NF007111">
    <property type="entry name" value="PRK09560.1"/>
    <property type="match status" value="1"/>
</dbReference>
<dbReference type="NCBIfam" id="NF007112">
    <property type="entry name" value="PRK09561.1"/>
    <property type="match status" value="1"/>
</dbReference>
<dbReference type="PANTHER" id="PTHR30341:SF0">
    <property type="entry name" value="NA(+)_H(+) ANTIPORTER NHAA"/>
    <property type="match status" value="1"/>
</dbReference>
<dbReference type="PANTHER" id="PTHR30341">
    <property type="entry name" value="SODIUM ION/PROTON ANTIPORTER NHAA-RELATED"/>
    <property type="match status" value="1"/>
</dbReference>
<dbReference type="Pfam" id="PF06965">
    <property type="entry name" value="Na_H_antiport_1"/>
    <property type="match status" value="1"/>
</dbReference>
<proteinExistence type="inferred from homology"/>
<protein>
    <recommendedName>
        <fullName evidence="1">Na(+)/H(+) antiporter NhaA 2</fullName>
    </recommendedName>
    <alternativeName>
        <fullName evidence="1">Sodium/proton antiporter NhaA 2</fullName>
    </alternativeName>
</protein>
<name>NHAA2_PSEA6</name>
<feature type="chain" id="PRO_0000334366" description="Na(+)/H(+) antiporter NhaA 2">
    <location>
        <begin position="1"/>
        <end position="401"/>
    </location>
</feature>
<feature type="transmembrane region" description="Helical" evidence="1">
    <location>
        <begin position="13"/>
        <end position="33"/>
    </location>
</feature>
<feature type="transmembrane region" description="Helical" evidence="1">
    <location>
        <begin position="59"/>
        <end position="79"/>
    </location>
</feature>
<feature type="transmembrane region" description="Helical" evidence="1">
    <location>
        <begin position="94"/>
        <end position="114"/>
    </location>
</feature>
<feature type="transmembrane region" description="Helical" evidence="1">
    <location>
        <begin position="125"/>
        <end position="145"/>
    </location>
</feature>
<feature type="transmembrane region" description="Helical" evidence="1">
    <location>
        <begin position="154"/>
        <end position="174"/>
    </location>
</feature>
<feature type="transmembrane region" description="Helical" evidence="1">
    <location>
        <begin position="178"/>
        <end position="198"/>
    </location>
</feature>
<feature type="transmembrane region" description="Helical" evidence="1">
    <location>
        <begin position="209"/>
        <end position="229"/>
    </location>
</feature>
<feature type="transmembrane region" description="Helical" evidence="1">
    <location>
        <begin position="260"/>
        <end position="280"/>
    </location>
</feature>
<feature type="transmembrane region" description="Helical" evidence="1">
    <location>
        <begin position="292"/>
        <end position="312"/>
    </location>
</feature>
<feature type="transmembrane region" description="Helical" evidence="1">
    <location>
        <begin position="332"/>
        <end position="352"/>
    </location>
</feature>
<feature type="transmembrane region" description="Helical" evidence="1">
    <location>
        <begin position="363"/>
        <end position="383"/>
    </location>
</feature>
<sequence>MQSYLGKLIQHEAAGGVLLVIAAAIAMVLANSPAYDFYNGLLEIPVSIRFGAFEIAKPLLLWVNDGLMAIFFFLVGLEVKREVLGGQLSSVSQITLPAVAAIAGIVFPALIYVWFNIDDPVAVNGWAIPSATDIAFAVGVFTIFGKFLPLSLKLFLLSVAIFDDIGAIVIIALFYSQDLSTTSLIVACAGFVALFLLNRFNVRRQAAYVLIGVVVWAAVLKSGVHATLAGFALAWFIPLKLKNEDGHPMLPHLEHKLHPWVGFVVLPIFAFANAGVSLFGASISDLLNPITLGIAVGLFVGKQLGIFGVCWITVKTGLAKLPDGSTWVQLYGVSLLCGIGFTMSLFIGSLAFEEQGLAYQTSVKAGVLLGSLVSAVLGAVLLARSNAKSKERAEREAARDA</sequence>
<organism>
    <name type="scientific">Pseudoalteromonas atlantica (strain T6c / ATCC BAA-1087)</name>
    <dbReference type="NCBI Taxonomy" id="3042615"/>
    <lineage>
        <taxon>Bacteria</taxon>
        <taxon>Pseudomonadati</taxon>
        <taxon>Pseudomonadota</taxon>
        <taxon>Gammaproteobacteria</taxon>
        <taxon>Alteromonadales</taxon>
        <taxon>Alteromonadaceae</taxon>
        <taxon>Paraglaciecola</taxon>
    </lineage>
</organism>
<comment type="function">
    <text evidence="1">Na(+)/H(+) antiporter that extrudes sodium in exchange for external protons.</text>
</comment>
<comment type="catalytic activity">
    <reaction evidence="1">
        <text>Na(+)(in) + 2 H(+)(out) = Na(+)(out) + 2 H(+)(in)</text>
        <dbReference type="Rhea" id="RHEA:29251"/>
        <dbReference type="ChEBI" id="CHEBI:15378"/>
        <dbReference type="ChEBI" id="CHEBI:29101"/>
    </reaction>
    <physiologicalReaction direction="left-to-right" evidence="1">
        <dbReference type="Rhea" id="RHEA:29252"/>
    </physiologicalReaction>
</comment>
<comment type="subcellular location">
    <subcellularLocation>
        <location evidence="1">Cell inner membrane</location>
        <topology evidence="1">Multi-pass membrane protein</topology>
    </subcellularLocation>
</comment>
<comment type="similarity">
    <text evidence="1">Belongs to the NhaA Na(+)/H(+) (TC 2.A.33) antiporter family.</text>
</comment>